<dbReference type="EMBL" id="CP000546">
    <property type="protein sequence ID" value="ABN02370.1"/>
    <property type="molecule type" value="Genomic_DNA"/>
</dbReference>
<dbReference type="RefSeq" id="WP_004191791.1">
    <property type="nucleotide sequence ID" value="NC_008836.1"/>
</dbReference>
<dbReference type="KEGG" id="bml:BMA10229_A0076"/>
<dbReference type="HOGENOM" id="CLU_008142_4_2_4"/>
<dbReference type="Proteomes" id="UP000002283">
    <property type="component" value="Chromosome I"/>
</dbReference>
<dbReference type="GO" id="GO:0005886">
    <property type="term" value="C:plasma membrane"/>
    <property type="evidence" value="ECO:0007669"/>
    <property type="project" value="UniProtKB-SubCell"/>
</dbReference>
<dbReference type="GO" id="GO:0015079">
    <property type="term" value="F:potassium ion transmembrane transporter activity"/>
    <property type="evidence" value="ECO:0007669"/>
    <property type="project" value="UniProtKB-UniRule"/>
</dbReference>
<dbReference type="GO" id="GO:0015293">
    <property type="term" value="F:symporter activity"/>
    <property type="evidence" value="ECO:0007669"/>
    <property type="project" value="UniProtKB-UniRule"/>
</dbReference>
<dbReference type="HAMAP" id="MF_01522">
    <property type="entry name" value="Kup"/>
    <property type="match status" value="1"/>
</dbReference>
<dbReference type="InterPro" id="IPR003855">
    <property type="entry name" value="K+_transporter"/>
</dbReference>
<dbReference type="InterPro" id="IPR053952">
    <property type="entry name" value="K_trans_C"/>
</dbReference>
<dbReference type="InterPro" id="IPR053951">
    <property type="entry name" value="K_trans_N"/>
</dbReference>
<dbReference type="InterPro" id="IPR023051">
    <property type="entry name" value="Kup"/>
</dbReference>
<dbReference type="PANTHER" id="PTHR30540:SF79">
    <property type="entry name" value="LOW AFFINITY POTASSIUM TRANSPORT SYSTEM PROTEIN KUP"/>
    <property type="match status" value="1"/>
</dbReference>
<dbReference type="PANTHER" id="PTHR30540">
    <property type="entry name" value="OSMOTIC STRESS POTASSIUM TRANSPORTER"/>
    <property type="match status" value="1"/>
</dbReference>
<dbReference type="Pfam" id="PF02705">
    <property type="entry name" value="K_trans"/>
    <property type="match status" value="1"/>
</dbReference>
<dbReference type="Pfam" id="PF22776">
    <property type="entry name" value="K_trans_C"/>
    <property type="match status" value="1"/>
</dbReference>
<evidence type="ECO:0000255" key="1">
    <source>
        <dbReference type="HAMAP-Rule" id="MF_01522"/>
    </source>
</evidence>
<organism>
    <name type="scientific">Burkholderia mallei (strain NCTC 10229)</name>
    <dbReference type="NCBI Taxonomy" id="412022"/>
    <lineage>
        <taxon>Bacteria</taxon>
        <taxon>Pseudomonadati</taxon>
        <taxon>Pseudomonadota</taxon>
        <taxon>Betaproteobacteria</taxon>
        <taxon>Burkholderiales</taxon>
        <taxon>Burkholderiaceae</taxon>
        <taxon>Burkholderia</taxon>
        <taxon>pseudomallei group</taxon>
    </lineage>
</organism>
<accession>A2S2B6</accession>
<gene>
    <name evidence="1" type="primary">kup</name>
    <name type="ordered locus">BMA10229_A0076</name>
</gene>
<name>KUP_BURM9</name>
<reference key="1">
    <citation type="journal article" date="2010" name="Genome Biol. Evol.">
        <title>Continuing evolution of Burkholderia mallei through genome reduction and large-scale rearrangements.</title>
        <authorList>
            <person name="Losada L."/>
            <person name="Ronning C.M."/>
            <person name="DeShazer D."/>
            <person name="Woods D."/>
            <person name="Fedorova N."/>
            <person name="Kim H.S."/>
            <person name="Shabalina S.A."/>
            <person name="Pearson T.R."/>
            <person name="Brinkac L."/>
            <person name="Tan P."/>
            <person name="Nandi T."/>
            <person name="Crabtree J."/>
            <person name="Badger J."/>
            <person name="Beckstrom-Sternberg S."/>
            <person name="Saqib M."/>
            <person name="Schutzer S.E."/>
            <person name="Keim P."/>
            <person name="Nierman W.C."/>
        </authorList>
    </citation>
    <scope>NUCLEOTIDE SEQUENCE [LARGE SCALE GENOMIC DNA]</scope>
    <source>
        <strain>NCTC 10229</strain>
    </source>
</reference>
<proteinExistence type="inferred from homology"/>
<keyword id="KW-0997">Cell inner membrane</keyword>
<keyword id="KW-1003">Cell membrane</keyword>
<keyword id="KW-0406">Ion transport</keyword>
<keyword id="KW-0472">Membrane</keyword>
<keyword id="KW-0630">Potassium</keyword>
<keyword id="KW-0633">Potassium transport</keyword>
<keyword id="KW-0769">Symport</keyword>
<keyword id="KW-0812">Transmembrane</keyword>
<keyword id="KW-1133">Transmembrane helix</keyword>
<keyword id="KW-0813">Transport</keyword>
<comment type="function">
    <text evidence="1">Transport of potassium into the cell. Likely operates as a K(+):H(+) symporter.</text>
</comment>
<comment type="catalytic activity">
    <reaction evidence="1">
        <text>K(+)(in) + H(+)(in) = K(+)(out) + H(+)(out)</text>
        <dbReference type="Rhea" id="RHEA:28490"/>
        <dbReference type="ChEBI" id="CHEBI:15378"/>
        <dbReference type="ChEBI" id="CHEBI:29103"/>
    </reaction>
    <physiologicalReaction direction="right-to-left" evidence="1">
        <dbReference type="Rhea" id="RHEA:28492"/>
    </physiologicalReaction>
</comment>
<comment type="subcellular location">
    <subcellularLocation>
        <location evidence="1">Cell inner membrane</location>
        <topology evidence="1">Multi-pass membrane protein</topology>
    </subcellularLocation>
</comment>
<comment type="similarity">
    <text evidence="1">Belongs to the HAK/KUP transporter (TC 2.A.72) family.</text>
</comment>
<sequence length="630" mass="68647">MTDTNHSSMRQHSLQSLAIAAIGVVFGDIGTSPLYSLKEAFSPAHGIPLTPSAILGVISLLFWAIILVVGIKYVLFVMRADNNGEGGVLALMALSLRPLNPKSRITGLMMALGIFGACMFYGDAVITPAISVMSAVEGLEVATPQLSHLVLPITIVILIALFWIQRHGTATVGKLFGPIMLLWFVTIAALGIYHIARAPMIVSAINPYYAFSFMSEHVLLAYVVLGSVVLVLTGAEALYADMGHFGAKPIRLAAYVLVMPSLVLNYFGQGALLLLDPKAIENPFFLLAPQWAALPLVVLSTVATVIASQAVISGAYSLTSQAIQLGYVPRMKILHTSELAIGQIYVPVVNWLLLFVILCIVIGFKSSDNLAAAYGIAVTATMVITTILAAVVMVKVWNWNKLLVAMIIGVFLVIDLGFFGANLLKVEQGGWLPLGIGALLFFLLMTWYKGRHIVKERTAADGIPLAPFLQGLLAHPPHRVSGTAIYLTGNDTLVPVSLLHNLKHNKVLHERTIFMTFVTRDIPYVKDHERVTVHDAGEGLYIVKAEYGFNETPDVKAVLEEVARQRGMTFELMDTSFFLARETVVPTHLPGMSIWRERVFAWMHQNAAKPTDFFAIPANRVVELGTKIEI</sequence>
<feature type="chain" id="PRO_1000068641" description="Probable potassium transport system protein Kup">
    <location>
        <begin position="1"/>
        <end position="630"/>
    </location>
</feature>
<feature type="transmembrane region" description="Helical" evidence="1">
    <location>
        <begin position="17"/>
        <end position="37"/>
    </location>
</feature>
<feature type="transmembrane region" description="Helical" evidence="1">
    <location>
        <begin position="51"/>
        <end position="71"/>
    </location>
</feature>
<feature type="transmembrane region" description="Helical" evidence="1">
    <location>
        <begin position="105"/>
        <end position="125"/>
    </location>
</feature>
<feature type="transmembrane region" description="Helical" evidence="1">
    <location>
        <begin position="144"/>
        <end position="164"/>
    </location>
</feature>
<feature type="transmembrane region" description="Helical" evidence="1">
    <location>
        <begin position="175"/>
        <end position="195"/>
    </location>
</feature>
<feature type="transmembrane region" description="Helical" evidence="1">
    <location>
        <begin position="218"/>
        <end position="238"/>
    </location>
</feature>
<feature type="transmembrane region" description="Helical" evidence="1">
    <location>
        <begin position="255"/>
        <end position="275"/>
    </location>
</feature>
<feature type="transmembrane region" description="Helical" evidence="1">
    <location>
        <begin position="283"/>
        <end position="303"/>
    </location>
</feature>
<feature type="transmembrane region" description="Helical" evidence="1">
    <location>
        <begin position="344"/>
        <end position="364"/>
    </location>
</feature>
<feature type="transmembrane region" description="Helical" evidence="1">
    <location>
        <begin position="374"/>
        <end position="394"/>
    </location>
</feature>
<feature type="transmembrane region" description="Helical" evidence="1">
    <location>
        <begin position="402"/>
        <end position="422"/>
    </location>
</feature>
<feature type="transmembrane region" description="Helical" evidence="1">
    <location>
        <begin position="428"/>
        <end position="448"/>
    </location>
</feature>
<protein>
    <recommendedName>
        <fullName evidence="1">Probable potassium transport system protein Kup</fullName>
    </recommendedName>
</protein>